<feature type="chain" id="PRO_0000071767" description="V-type proton ATPase 16 kDa proteolipid subunit">
    <location>
        <begin position="1"/>
        <end position="165"/>
    </location>
</feature>
<feature type="topological domain" description="Lumenal" evidence="2">
    <location>
        <begin position="1"/>
        <end position="12"/>
    </location>
</feature>
<feature type="transmembrane region" description="Helical" evidence="2">
    <location>
        <begin position="13"/>
        <end position="33"/>
    </location>
</feature>
<feature type="topological domain" description="Cytoplasmic" evidence="2">
    <location>
        <begin position="34"/>
        <end position="55"/>
    </location>
</feature>
<feature type="transmembrane region" description="Helical" evidence="2">
    <location>
        <begin position="56"/>
        <end position="76"/>
    </location>
</feature>
<feature type="topological domain" description="Lumenal" evidence="2">
    <location>
        <begin position="77"/>
        <end position="95"/>
    </location>
</feature>
<feature type="transmembrane region" description="Helical" evidence="2">
    <location>
        <begin position="96"/>
        <end position="117"/>
    </location>
</feature>
<feature type="topological domain" description="Cytoplasmic" evidence="2">
    <location>
        <begin position="118"/>
        <end position="129"/>
    </location>
</feature>
<feature type="transmembrane region" description="Helical" evidence="2">
    <location>
        <begin position="130"/>
        <end position="155"/>
    </location>
</feature>
<feature type="topological domain" description="Lumenal" evidence="2">
    <location>
        <begin position="156"/>
        <end position="165"/>
    </location>
</feature>
<feature type="site" description="Essential for proton translocation" evidence="1">
    <location>
        <position position="142"/>
    </location>
</feature>
<proteinExistence type="evidence at transcript level"/>
<organism>
    <name type="scientific">Beta vulgaris</name>
    <name type="common">Sugar beet</name>
    <dbReference type="NCBI Taxonomy" id="161934"/>
    <lineage>
        <taxon>Eukaryota</taxon>
        <taxon>Viridiplantae</taxon>
        <taxon>Streptophyta</taxon>
        <taxon>Embryophyta</taxon>
        <taxon>Tracheophyta</taxon>
        <taxon>Spermatophyta</taxon>
        <taxon>Magnoliopsida</taxon>
        <taxon>eudicotyledons</taxon>
        <taxon>Gunneridae</taxon>
        <taxon>Pentapetalae</taxon>
        <taxon>Caryophyllales</taxon>
        <taxon>Chenopodiaceae</taxon>
        <taxon>Betoideae</taxon>
        <taxon>Beta</taxon>
    </lineage>
</organism>
<reference key="1">
    <citation type="journal article" date="1999" name="Plant Mol. Biol.">
        <title>cDNA and genomic cloning of sugar beet V-type H+-ATPase subunit A and c isoforms: evidence for coordinate expression during plant development and coordinate induction in response to high salinity.</title>
        <authorList>
            <person name="Lehr A."/>
            <person name="Kirsch M."/>
            <person name="Viereck R."/>
            <person name="Schiemann J."/>
            <person name="Rausch T."/>
        </authorList>
    </citation>
    <scope>NUCLEOTIDE SEQUENCE [GENOMIC DNA / MRNA]</scope>
</reference>
<dbReference type="EMBL" id="X98851">
    <property type="protein sequence ID" value="CAA67356.1"/>
    <property type="molecule type" value="mRNA"/>
</dbReference>
<dbReference type="EMBL" id="Y11037">
    <property type="protein sequence ID" value="CAA71930.1"/>
    <property type="molecule type" value="Genomic_DNA"/>
</dbReference>
<dbReference type="RefSeq" id="NP_001290014.1">
    <property type="nucleotide sequence ID" value="NM_001303085.1"/>
</dbReference>
<dbReference type="SMR" id="P68162"/>
<dbReference type="GeneID" id="104887744"/>
<dbReference type="KEGG" id="bvg:104884742"/>
<dbReference type="KEGG" id="bvg:104887744"/>
<dbReference type="OMA" id="GMGIAQM"/>
<dbReference type="PhylomeDB" id="P68162"/>
<dbReference type="GO" id="GO:0033179">
    <property type="term" value="C:proton-transporting V-type ATPase, V0 domain"/>
    <property type="evidence" value="ECO:0007669"/>
    <property type="project" value="InterPro"/>
</dbReference>
<dbReference type="GO" id="GO:0005774">
    <property type="term" value="C:vacuolar membrane"/>
    <property type="evidence" value="ECO:0007669"/>
    <property type="project" value="UniProtKB-SubCell"/>
</dbReference>
<dbReference type="GO" id="GO:0046961">
    <property type="term" value="F:proton-transporting ATPase activity, rotational mechanism"/>
    <property type="evidence" value="ECO:0007669"/>
    <property type="project" value="InterPro"/>
</dbReference>
<dbReference type="CDD" id="cd18175">
    <property type="entry name" value="ATP-synt_Vo_c_ATP6C_rpt1"/>
    <property type="match status" value="1"/>
</dbReference>
<dbReference type="CDD" id="cd18176">
    <property type="entry name" value="ATP-synt_Vo_c_ATP6C_rpt2"/>
    <property type="match status" value="1"/>
</dbReference>
<dbReference type="FunFam" id="1.20.120.610:FF:000003">
    <property type="entry name" value="V-type proton ATPase proteolipid subunit"/>
    <property type="match status" value="1"/>
</dbReference>
<dbReference type="Gene3D" id="1.20.120.610">
    <property type="entry name" value="lithium bound rotor ring of v- atpase"/>
    <property type="match status" value="1"/>
</dbReference>
<dbReference type="InterPro" id="IPR002379">
    <property type="entry name" value="ATPase_proteolipid_c-like_dom"/>
</dbReference>
<dbReference type="InterPro" id="IPR000245">
    <property type="entry name" value="ATPase_proteolipid_csu"/>
</dbReference>
<dbReference type="InterPro" id="IPR011555">
    <property type="entry name" value="ATPase_proteolipid_su_C_euk"/>
</dbReference>
<dbReference type="InterPro" id="IPR035921">
    <property type="entry name" value="F/V-ATP_Csub_sf"/>
</dbReference>
<dbReference type="NCBIfam" id="TIGR01100">
    <property type="entry name" value="V_ATP_synt_C"/>
    <property type="match status" value="1"/>
</dbReference>
<dbReference type="PANTHER" id="PTHR10263">
    <property type="entry name" value="V-TYPE PROTON ATPASE PROTEOLIPID SUBUNIT"/>
    <property type="match status" value="1"/>
</dbReference>
<dbReference type="Pfam" id="PF00137">
    <property type="entry name" value="ATP-synt_C"/>
    <property type="match status" value="2"/>
</dbReference>
<dbReference type="PRINTS" id="PR00122">
    <property type="entry name" value="VACATPASE"/>
</dbReference>
<dbReference type="SUPFAM" id="SSF81333">
    <property type="entry name" value="F1F0 ATP synthase subunit C"/>
    <property type="match status" value="2"/>
</dbReference>
<keyword id="KW-0375">Hydrogen ion transport</keyword>
<keyword id="KW-0406">Ion transport</keyword>
<keyword id="KW-0472">Membrane</keyword>
<keyword id="KW-0812">Transmembrane</keyword>
<keyword id="KW-1133">Transmembrane helix</keyword>
<keyword id="KW-0813">Transport</keyword>
<keyword id="KW-0926">Vacuole</keyword>
<protein>
    <recommendedName>
        <fullName>V-type proton ATPase 16 kDa proteolipid subunit</fullName>
        <shortName>V-ATPase 16 kDa proteolipid subunit</shortName>
    </recommendedName>
    <alternativeName>
        <fullName>Vacuolar proton pump 16 kDa proteolipid subunit</fullName>
    </alternativeName>
</protein>
<sequence>MSTVFNGDETAPFFGFLGAAAALVFSCMGAAYGTAKSGVGVASMGVMRPELVMKSIVPVVMAGVLGIYGLIIAVIISTGINPKAKSYYLFDGYAHLSSGLACGLAGLSAGMAIGIVGDAGVRANAQQPKLFVGMILILIFAEALALYGLIVGIILSSRAGQSRAD</sequence>
<gene>
    <name type="primary">VMAC1</name>
    <name type="synonym">BV-16/1</name>
</gene>
<accession>P68162</accession>
<accession>Q39437</accession>
<accession>Q6LAL1</accession>
<evidence type="ECO:0000250" key="1"/>
<evidence type="ECO:0000255" key="2"/>
<evidence type="ECO:0000305" key="3"/>
<name>VATL_BETVU</name>
<comment type="function">
    <text>Proton-conducting pore forming subunit of the membrane integral V0 complex of vacuolar ATPase. V-ATPase is responsible for acidifying a variety of intracellular compartments in eukaryotic cells.</text>
</comment>
<comment type="subunit">
    <text>V-ATPase is a heteromultimeric enzyme composed of a peripheral catalytic V1 complex (main components: subunits A, B, C, D, E, and F) attached to an integral membrane V0 proton pore complex (main component: the proteolipid protein; which is present as a hexamer that forms the proton-conducting pore).</text>
</comment>
<comment type="subcellular location">
    <subcellularLocation>
        <location>Vacuole membrane</location>
        <topology>Multi-pass membrane protein</topology>
    </subcellularLocation>
    <text>Tonoplast.</text>
</comment>
<comment type="similarity">
    <text evidence="3">Belongs to the V-ATPase proteolipid subunit family.</text>
</comment>